<organism>
    <name type="scientific">Chlamydia trachomatis serovar D (strain ATCC VR-885 / DSM 19411 / UW-3/Cx)</name>
    <dbReference type="NCBI Taxonomy" id="272561"/>
    <lineage>
        <taxon>Bacteria</taxon>
        <taxon>Pseudomonadati</taxon>
        <taxon>Chlamydiota</taxon>
        <taxon>Chlamydiia</taxon>
        <taxon>Chlamydiales</taxon>
        <taxon>Chlamydiaceae</taxon>
        <taxon>Chlamydia/Chlamydophila group</taxon>
        <taxon>Chlamydia</taxon>
    </lineage>
</organism>
<evidence type="ECO:0000250" key="1"/>
<evidence type="ECO:0000255" key="2"/>
<evidence type="ECO:0000305" key="3"/>
<gene>
    <name type="primary">aaxA</name>
    <name type="ordered locus">CT_372</name>
</gene>
<comment type="function">
    <text evidence="1">Facilitates L-arginine uptake, as part of the AaxABC system. The arginine uptake by the bacterium in the macrophage may be a virulence factor against the host innate immune response (By similarity).</text>
</comment>
<comment type="subcellular location">
    <subcellularLocation>
        <location evidence="1">Cell outer membrane</location>
        <topology evidence="1">Multi-pass membrane protein</topology>
    </subcellularLocation>
</comment>
<comment type="similarity">
    <text evidence="3">Belongs to the OprB family.</text>
</comment>
<comment type="sequence caution" evidence="3">
    <conflict type="erroneous initiation">
        <sequence resource="EMBL-CDS" id="AAC67968"/>
    </conflict>
</comment>
<sequence length="461" mass="51470">MSFRSVLLTALLSLSFTTTMQAAHHHYHRYTDKLHRQNHKKDLISPKPTEQEACNTSSLSKELIPLSEQRGLLSPICDFISERPCLHGVSVRNLKQALKNSAGTQIALDWSILPQWFNPRVSHAPKLSIRDFGYSAHQTVTEATPPCWQNCFNPSAAVTIYDSSYGKGVFQISYTLVRYWRENAATAGDAMMLAGSINDYPSRQNIFSQFTFSQNFPNERVSLTIGQYSLYAIDGTLYNNDQQLGFISYALSQNPTATYSSGSLGAYLQVAPTASTSLQIGFQDAYNISGSSIKWSNLTKNRYNFHGFASWAPRCCLGSGQYSVLLYVTRQVPEQMEQTMGWSVNASQHISSKLYVFGRYSGVTGHVFPINRTYSFGMASANLFNRNPQDLFGIACAFNNVHLSASPNTKRKYETVIEGFATIGCGPYLSFAPDFQLYLYPALRPNKQSARVYSVRANLAI</sequence>
<reference key="1">
    <citation type="journal article" date="1998" name="Science">
        <title>Genome sequence of an obligate intracellular pathogen of humans: Chlamydia trachomatis.</title>
        <authorList>
            <person name="Stephens R.S."/>
            <person name="Kalman S."/>
            <person name="Lammel C.J."/>
            <person name="Fan J."/>
            <person name="Marathe R."/>
            <person name="Aravind L."/>
            <person name="Mitchell W.P."/>
            <person name="Olinger L."/>
            <person name="Tatusov R.L."/>
            <person name="Zhao Q."/>
            <person name="Koonin E.V."/>
            <person name="Davis R.W."/>
        </authorList>
    </citation>
    <scope>NUCLEOTIDE SEQUENCE [LARGE SCALE GENOMIC DNA]</scope>
    <source>
        <strain>ATCC VR-885 / DSM 19411 / UW-3/Cx</strain>
    </source>
</reference>
<dbReference type="EMBL" id="AE001273">
    <property type="protein sequence ID" value="AAC67968.1"/>
    <property type="status" value="ALT_INIT"/>
    <property type="molecule type" value="Genomic_DNA"/>
</dbReference>
<dbReference type="PIR" id="E71523">
    <property type="entry name" value="E71523"/>
</dbReference>
<dbReference type="RefSeq" id="NP_219881.1">
    <property type="nucleotide sequence ID" value="NC_000117.1"/>
</dbReference>
<dbReference type="STRING" id="272561.CT_372"/>
<dbReference type="EnsemblBacteria" id="AAC67968">
    <property type="protein sequence ID" value="AAC67968"/>
    <property type="gene ID" value="CT_372"/>
</dbReference>
<dbReference type="GeneID" id="884743"/>
<dbReference type="KEGG" id="ctr:CT_372"/>
<dbReference type="PATRIC" id="fig|272561.5.peg.401"/>
<dbReference type="HOGENOM" id="CLU_619231_0_0_0"/>
<dbReference type="InParanoid" id="O84377"/>
<dbReference type="OrthoDB" id="18651at2"/>
<dbReference type="Proteomes" id="UP000000431">
    <property type="component" value="Chromosome"/>
</dbReference>
<dbReference type="GO" id="GO:0009279">
    <property type="term" value="C:cell outer membrane"/>
    <property type="evidence" value="ECO:0007669"/>
    <property type="project" value="UniProtKB-SubCell"/>
</dbReference>
<dbReference type="GO" id="GO:0046930">
    <property type="term" value="C:pore complex"/>
    <property type="evidence" value="ECO:0007669"/>
    <property type="project" value="UniProtKB-KW"/>
</dbReference>
<dbReference type="GO" id="GO:0015288">
    <property type="term" value="F:porin activity"/>
    <property type="evidence" value="ECO:0007669"/>
    <property type="project" value="UniProtKB-KW"/>
</dbReference>
<dbReference type="GO" id="GO:0006865">
    <property type="term" value="P:amino acid transport"/>
    <property type="evidence" value="ECO:0007669"/>
    <property type="project" value="UniProtKB-KW"/>
</dbReference>
<dbReference type="GO" id="GO:0008643">
    <property type="term" value="P:carbohydrate transport"/>
    <property type="evidence" value="ECO:0007669"/>
    <property type="project" value="InterPro"/>
</dbReference>
<dbReference type="GO" id="GO:0006811">
    <property type="term" value="P:monoatomic ion transport"/>
    <property type="evidence" value="ECO:0007669"/>
    <property type="project" value="UniProtKB-KW"/>
</dbReference>
<dbReference type="Gene3D" id="2.40.160.180">
    <property type="entry name" value="Carbohydrate-selective porin OprB"/>
    <property type="match status" value="1"/>
</dbReference>
<dbReference type="InterPro" id="IPR007049">
    <property type="entry name" value="Carb-sel_porin_OprB"/>
</dbReference>
<dbReference type="InterPro" id="IPR038673">
    <property type="entry name" value="OprB_sf"/>
</dbReference>
<dbReference type="Pfam" id="PF04966">
    <property type="entry name" value="OprB"/>
    <property type="match status" value="1"/>
</dbReference>
<name>AAXA_CHLTR</name>
<keyword id="KW-0029">Amino-acid transport</keyword>
<keyword id="KW-0998">Cell outer membrane</keyword>
<keyword id="KW-0406">Ion transport</keyword>
<keyword id="KW-0472">Membrane</keyword>
<keyword id="KW-0626">Porin</keyword>
<keyword id="KW-1185">Reference proteome</keyword>
<keyword id="KW-0732">Signal</keyword>
<keyword id="KW-0812">Transmembrane</keyword>
<keyword id="KW-1134">Transmembrane beta strand</keyword>
<keyword id="KW-0813">Transport</keyword>
<keyword id="KW-0843">Virulence</keyword>
<accession>O84377</accession>
<protein>
    <recommendedName>
        <fullName>Porin AaxA</fullName>
    </recommendedName>
    <alternativeName>
        <fullName>Outer membrane protein AaxA</fullName>
    </alternativeName>
</protein>
<proteinExistence type="inferred from homology"/>
<feature type="signal peptide" evidence="2">
    <location>
        <begin position="1"/>
        <end position="22"/>
    </location>
</feature>
<feature type="chain" id="PRO_0000363184" description="Porin AaxA">
    <location>
        <begin position="23"/>
        <end position="461"/>
    </location>
</feature>